<evidence type="ECO:0000255" key="1">
    <source>
        <dbReference type="PROSITE-ProRule" id="PRU00428"/>
    </source>
</evidence>
<evidence type="ECO:0000269" key="2">
    <source>
    </source>
</evidence>
<evidence type="ECO:0000303" key="3">
    <source>
    </source>
</evidence>
<evidence type="ECO:0000305" key="4">
    <source>
    </source>
</evidence>
<sequence length="442" mass="48436">MFEKISQFLVPIAGRLNNNRYLQVLRDAFMLAFPLTIFGSIFVVLTNLPFLNKIMNASMLTSFQSHFGIASTATMGIMSVFVVFGIGYYLSKSYQVEAVFGGAIALVSFLLLTPFIIQPETGDAITGVIPVDRLGAKGMFLGMITAFLSGEIYRRIVQKNLTIKMPAGVPPAVAKSFAALIPAFITLTVFLLINVMVTLFFKTNMHDVIYHAIQAPLVGLGSGIIPTLIAVFFIQILWFFGLHGQIIINSVMDPIWNTLQVENLSAYTAGKEIPHIISKPFMEIYTVGMGGTGMTLAIVFTILIFMKSRQMKQVSKLGLAPGIFNVNEPIIFGLPIVMNPIIIVPWVLAPMVVTLVTYLAMSAGLVPPPTGVTVPWTVPLFINGIMATNSIMGGVMQLINLLIVFVIWFPFLKAMDKLNLAKEKEQAVQETAAQQNDNSIKM</sequence>
<accession>O05507</accession>
<accession>Q797E0</accession>
<protein>
    <recommendedName>
        <fullName evidence="3">PTS system oligo-beta-mannoside-specific EIIC component</fullName>
    </recommendedName>
    <alternativeName>
        <fullName evidence="3">Glucomannan utilization protein C</fullName>
    </alternativeName>
    <alternativeName>
        <fullName evidence="3">Oligo-beta-mannoside permease IIC component</fullName>
    </alternativeName>
</protein>
<proteinExistence type="evidence at protein level"/>
<comment type="function">
    <text evidence="4">The phosphoenolpyruvate-dependent sugar phosphotransferase system (sugar PTS), a major carbohydrate active transport system, catalyzes the phosphorylation of incoming sugar substrates concomitantly with their translocation across the cell membrane. The enzyme II GmuABC PTS system is involved in the transport of oligo-glucomannans such as cellobiose or mannobiose.</text>
</comment>
<comment type="subcellular location">
    <subcellularLocation>
        <location evidence="1">Cell membrane</location>
        <topology evidence="1">Multi-pass membrane protein</topology>
    </subcellularLocation>
</comment>
<comment type="induction">
    <text evidence="2">Up-regulated by konjac glucomannan and by cellobiose and mannobiose, the possible degradation products of glucomannan. Repressed by glucose via the carbon catabolite repression system. Also repressed by GmuR.</text>
</comment>
<comment type="domain">
    <text evidence="1">The EIIC type-3 domain forms the PTS system translocation channel and contains the specific substrate-binding site.</text>
</comment>
<gene>
    <name evidence="3" type="primary">gmuC</name>
    <name type="synonym">ydhO</name>
    <name type="ordered locus">BSU05830</name>
</gene>
<reference key="1">
    <citation type="journal article" date="1997" name="Microbiology">
        <title>Nucleotide sequence and analysis of the phoB-rrnE-groESL region of the Bacillus subtilis chromosome.</title>
        <authorList>
            <person name="Sadaie Y."/>
            <person name="Yata K."/>
            <person name="Fujita M."/>
            <person name="Sagai H."/>
            <person name="Itaya M."/>
            <person name="Kasahara Y."/>
            <person name="Ogasawara N."/>
        </authorList>
    </citation>
    <scope>NUCLEOTIDE SEQUENCE [GENOMIC DNA]</scope>
    <source>
        <strain>168 / JH642</strain>
    </source>
</reference>
<reference key="2">
    <citation type="journal article" date="1997" name="Nature">
        <title>The complete genome sequence of the Gram-positive bacterium Bacillus subtilis.</title>
        <authorList>
            <person name="Kunst F."/>
            <person name="Ogasawara N."/>
            <person name="Moszer I."/>
            <person name="Albertini A.M."/>
            <person name="Alloni G."/>
            <person name="Azevedo V."/>
            <person name="Bertero M.G."/>
            <person name="Bessieres P."/>
            <person name="Bolotin A."/>
            <person name="Borchert S."/>
            <person name="Borriss R."/>
            <person name="Boursier L."/>
            <person name="Brans A."/>
            <person name="Braun M."/>
            <person name="Brignell S.C."/>
            <person name="Bron S."/>
            <person name="Brouillet S."/>
            <person name="Bruschi C.V."/>
            <person name="Caldwell B."/>
            <person name="Capuano V."/>
            <person name="Carter N.M."/>
            <person name="Choi S.-K."/>
            <person name="Codani J.-J."/>
            <person name="Connerton I.F."/>
            <person name="Cummings N.J."/>
            <person name="Daniel R.A."/>
            <person name="Denizot F."/>
            <person name="Devine K.M."/>
            <person name="Duesterhoeft A."/>
            <person name="Ehrlich S.D."/>
            <person name="Emmerson P.T."/>
            <person name="Entian K.-D."/>
            <person name="Errington J."/>
            <person name="Fabret C."/>
            <person name="Ferrari E."/>
            <person name="Foulger D."/>
            <person name="Fritz C."/>
            <person name="Fujita M."/>
            <person name="Fujita Y."/>
            <person name="Fuma S."/>
            <person name="Galizzi A."/>
            <person name="Galleron N."/>
            <person name="Ghim S.-Y."/>
            <person name="Glaser P."/>
            <person name="Goffeau A."/>
            <person name="Golightly E.J."/>
            <person name="Grandi G."/>
            <person name="Guiseppi G."/>
            <person name="Guy B.J."/>
            <person name="Haga K."/>
            <person name="Haiech J."/>
            <person name="Harwood C.R."/>
            <person name="Henaut A."/>
            <person name="Hilbert H."/>
            <person name="Holsappel S."/>
            <person name="Hosono S."/>
            <person name="Hullo M.-F."/>
            <person name="Itaya M."/>
            <person name="Jones L.-M."/>
            <person name="Joris B."/>
            <person name="Karamata D."/>
            <person name="Kasahara Y."/>
            <person name="Klaerr-Blanchard M."/>
            <person name="Klein C."/>
            <person name="Kobayashi Y."/>
            <person name="Koetter P."/>
            <person name="Koningstein G."/>
            <person name="Krogh S."/>
            <person name="Kumano M."/>
            <person name="Kurita K."/>
            <person name="Lapidus A."/>
            <person name="Lardinois S."/>
            <person name="Lauber J."/>
            <person name="Lazarevic V."/>
            <person name="Lee S.-M."/>
            <person name="Levine A."/>
            <person name="Liu H."/>
            <person name="Masuda S."/>
            <person name="Mauel C."/>
            <person name="Medigue C."/>
            <person name="Medina N."/>
            <person name="Mellado R.P."/>
            <person name="Mizuno M."/>
            <person name="Moestl D."/>
            <person name="Nakai S."/>
            <person name="Noback M."/>
            <person name="Noone D."/>
            <person name="O'Reilly M."/>
            <person name="Ogawa K."/>
            <person name="Ogiwara A."/>
            <person name="Oudega B."/>
            <person name="Park S.-H."/>
            <person name="Parro V."/>
            <person name="Pohl T.M."/>
            <person name="Portetelle D."/>
            <person name="Porwollik S."/>
            <person name="Prescott A.M."/>
            <person name="Presecan E."/>
            <person name="Pujic P."/>
            <person name="Purnelle B."/>
            <person name="Rapoport G."/>
            <person name="Rey M."/>
            <person name="Reynolds S."/>
            <person name="Rieger M."/>
            <person name="Rivolta C."/>
            <person name="Rocha E."/>
            <person name="Roche B."/>
            <person name="Rose M."/>
            <person name="Sadaie Y."/>
            <person name="Sato T."/>
            <person name="Scanlan E."/>
            <person name="Schleich S."/>
            <person name="Schroeter R."/>
            <person name="Scoffone F."/>
            <person name="Sekiguchi J."/>
            <person name="Sekowska A."/>
            <person name="Seror S.J."/>
            <person name="Serror P."/>
            <person name="Shin B.-S."/>
            <person name="Soldo B."/>
            <person name="Sorokin A."/>
            <person name="Tacconi E."/>
            <person name="Takagi T."/>
            <person name="Takahashi H."/>
            <person name="Takemaru K."/>
            <person name="Takeuchi M."/>
            <person name="Tamakoshi A."/>
            <person name="Tanaka T."/>
            <person name="Terpstra P."/>
            <person name="Tognoni A."/>
            <person name="Tosato V."/>
            <person name="Uchiyama S."/>
            <person name="Vandenbol M."/>
            <person name="Vannier F."/>
            <person name="Vassarotti A."/>
            <person name="Viari A."/>
            <person name="Wambutt R."/>
            <person name="Wedler E."/>
            <person name="Wedler H."/>
            <person name="Weitzenegger T."/>
            <person name="Winters P."/>
            <person name="Wipat A."/>
            <person name="Yamamoto H."/>
            <person name="Yamane K."/>
            <person name="Yasumoto K."/>
            <person name="Yata K."/>
            <person name="Yoshida K."/>
            <person name="Yoshikawa H.-F."/>
            <person name="Zumstein E."/>
            <person name="Yoshikawa H."/>
            <person name="Danchin A."/>
        </authorList>
    </citation>
    <scope>NUCLEOTIDE SEQUENCE [LARGE SCALE GENOMIC DNA]</scope>
    <source>
        <strain>168</strain>
    </source>
</reference>
<reference key="3">
    <citation type="journal article" date="2008" name="FEMS Microbiol. Lett.">
        <title>Glucomannan utilization operon of Bacillus subtilis.</title>
        <authorList>
            <person name="Sadaie Y."/>
            <person name="Nakadate H."/>
            <person name="Fukui R."/>
            <person name="Yee L.M."/>
            <person name="Asai K."/>
        </authorList>
    </citation>
    <scope>FUNCTION IN GLUCOMANNAN UTILIZATION</scope>
    <scope>INDUCTION</scope>
    <source>
        <strain>168</strain>
    </source>
</reference>
<name>PTEC_BACSU</name>
<dbReference type="EMBL" id="D88802">
    <property type="protein sequence ID" value="BAA19707.1"/>
    <property type="molecule type" value="Genomic_DNA"/>
</dbReference>
<dbReference type="EMBL" id="AL009126">
    <property type="protein sequence ID" value="CAB12402.1"/>
    <property type="molecule type" value="Genomic_DNA"/>
</dbReference>
<dbReference type="PIR" id="C69785">
    <property type="entry name" value="C69785"/>
</dbReference>
<dbReference type="RefSeq" id="NP_388464.1">
    <property type="nucleotide sequence ID" value="NC_000964.3"/>
</dbReference>
<dbReference type="SMR" id="O05507"/>
<dbReference type="FunCoup" id="O05507">
    <property type="interactions" value="129"/>
</dbReference>
<dbReference type="STRING" id="224308.BSU05830"/>
<dbReference type="TCDB" id="4.A.3.2.10">
    <property type="family name" value="the pts lactose-n,n'-diacetylchitobiose-Beta-glucoside (lac) family"/>
</dbReference>
<dbReference type="PaxDb" id="224308-BSU05830"/>
<dbReference type="EnsemblBacteria" id="CAB12402">
    <property type="protein sequence ID" value="CAB12402"/>
    <property type="gene ID" value="BSU_05830"/>
</dbReference>
<dbReference type="GeneID" id="939882"/>
<dbReference type="KEGG" id="bsu:BSU05830"/>
<dbReference type="PATRIC" id="fig|224308.179.peg.627"/>
<dbReference type="eggNOG" id="COG1455">
    <property type="taxonomic scope" value="Bacteria"/>
</dbReference>
<dbReference type="InParanoid" id="O05507"/>
<dbReference type="OrthoDB" id="1641940at2"/>
<dbReference type="PhylomeDB" id="O05507"/>
<dbReference type="BioCyc" id="BSUB:BSU05830-MONOMER"/>
<dbReference type="Proteomes" id="UP000001570">
    <property type="component" value="Chromosome"/>
</dbReference>
<dbReference type="GO" id="GO:0005886">
    <property type="term" value="C:plasma membrane"/>
    <property type="evidence" value="ECO:0000318"/>
    <property type="project" value="GO_Central"/>
</dbReference>
<dbReference type="GO" id="GO:0008982">
    <property type="term" value="F:protein-N(PI)-phosphohistidine-sugar phosphotransferase activity"/>
    <property type="evidence" value="ECO:0007669"/>
    <property type="project" value="InterPro"/>
</dbReference>
<dbReference type="GO" id="GO:1901264">
    <property type="term" value="P:carbohydrate derivative transport"/>
    <property type="evidence" value="ECO:0000318"/>
    <property type="project" value="GO_Central"/>
</dbReference>
<dbReference type="GO" id="GO:0009401">
    <property type="term" value="P:phosphoenolpyruvate-dependent sugar phosphotransferase system"/>
    <property type="evidence" value="ECO:0007669"/>
    <property type="project" value="UniProtKB-KW"/>
</dbReference>
<dbReference type="GO" id="GO:0015774">
    <property type="term" value="P:polysaccharide transport"/>
    <property type="evidence" value="ECO:0007669"/>
    <property type="project" value="UniProtKB-KW"/>
</dbReference>
<dbReference type="InterPro" id="IPR003352">
    <property type="entry name" value="PTS_EIIC"/>
</dbReference>
<dbReference type="InterPro" id="IPR004501">
    <property type="entry name" value="PTS_EIIC_3"/>
</dbReference>
<dbReference type="InterPro" id="IPR004796">
    <property type="entry name" value="PTS_IIC_cello"/>
</dbReference>
<dbReference type="InterPro" id="IPR051088">
    <property type="entry name" value="PTS_Sugar-EIIC/EIIB"/>
</dbReference>
<dbReference type="NCBIfam" id="TIGR00359">
    <property type="entry name" value="cello_pts_IIC"/>
    <property type="match status" value="1"/>
</dbReference>
<dbReference type="NCBIfam" id="TIGR00410">
    <property type="entry name" value="lacE"/>
    <property type="match status" value="1"/>
</dbReference>
<dbReference type="PANTHER" id="PTHR33989">
    <property type="match status" value="1"/>
</dbReference>
<dbReference type="PANTHER" id="PTHR33989:SF4">
    <property type="entry name" value="PTS SYSTEM N,N'-DIACETYLCHITOBIOSE-SPECIFIC EIIC COMPONENT"/>
    <property type="match status" value="1"/>
</dbReference>
<dbReference type="Pfam" id="PF02378">
    <property type="entry name" value="PTS_EIIC"/>
    <property type="match status" value="1"/>
</dbReference>
<dbReference type="PIRSF" id="PIRSF006351">
    <property type="entry name" value="PTS_EIIC-Cellobiose"/>
    <property type="match status" value="1"/>
</dbReference>
<dbReference type="PROSITE" id="PS51105">
    <property type="entry name" value="PTS_EIIC_TYPE_3"/>
    <property type="match status" value="1"/>
</dbReference>
<keyword id="KW-1003">Cell membrane</keyword>
<keyword id="KW-0472">Membrane</keyword>
<keyword id="KW-0598">Phosphotransferase system</keyword>
<keyword id="KW-0625">Polysaccharide transport</keyword>
<keyword id="KW-1185">Reference proteome</keyword>
<keyword id="KW-0762">Sugar transport</keyword>
<keyword id="KW-0812">Transmembrane</keyword>
<keyword id="KW-1133">Transmembrane helix</keyword>
<keyword id="KW-0813">Transport</keyword>
<feature type="chain" id="PRO_0000372432" description="PTS system oligo-beta-mannoside-specific EIIC component">
    <location>
        <begin position="1"/>
        <end position="442"/>
    </location>
</feature>
<feature type="transmembrane region" description="Helical" evidence="1">
    <location>
        <begin position="28"/>
        <end position="48"/>
    </location>
</feature>
<feature type="transmembrane region" description="Helical" evidence="1">
    <location>
        <begin position="67"/>
        <end position="87"/>
    </location>
</feature>
<feature type="transmembrane region" description="Helical" evidence="1">
    <location>
        <begin position="97"/>
        <end position="117"/>
    </location>
</feature>
<feature type="transmembrane region" description="Helical" evidence="1">
    <location>
        <begin position="138"/>
        <end position="157"/>
    </location>
</feature>
<feature type="transmembrane region" description="Helical" evidence="1">
    <location>
        <begin position="177"/>
        <end position="197"/>
    </location>
</feature>
<feature type="transmembrane region" description="Helical" evidence="1">
    <location>
        <begin position="205"/>
        <end position="225"/>
    </location>
</feature>
<feature type="transmembrane region" description="Helical" evidence="1">
    <location>
        <begin position="228"/>
        <end position="248"/>
    </location>
</feature>
<feature type="transmembrane region" description="Helical" evidence="1">
    <location>
        <begin position="286"/>
        <end position="306"/>
    </location>
</feature>
<feature type="transmembrane region" description="Helical" evidence="1">
    <location>
        <begin position="329"/>
        <end position="349"/>
    </location>
</feature>
<feature type="transmembrane region" description="Helical" evidence="1">
    <location>
        <begin position="365"/>
        <end position="385"/>
    </location>
</feature>
<feature type="transmembrane region" description="Helical" evidence="1">
    <location>
        <begin position="391"/>
        <end position="411"/>
    </location>
</feature>
<feature type="domain" description="PTS EIIC type-3" evidence="1">
    <location>
        <begin position="5"/>
        <end position="411"/>
    </location>
</feature>
<organism>
    <name type="scientific">Bacillus subtilis (strain 168)</name>
    <dbReference type="NCBI Taxonomy" id="224308"/>
    <lineage>
        <taxon>Bacteria</taxon>
        <taxon>Bacillati</taxon>
        <taxon>Bacillota</taxon>
        <taxon>Bacilli</taxon>
        <taxon>Bacillales</taxon>
        <taxon>Bacillaceae</taxon>
        <taxon>Bacillus</taxon>
    </lineage>
</organism>